<keyword id="KW-0378">Hydrolase</keyword>
<keyword id="KW-0464">Manganese</keyword>
<name>ADEC_LISIN</name>
<organism>
    <name type="scientific">Listeria innocua serovar 6a (strain ATCC BAA-680 / CLIP 11262)</name>
    <dbReference type="NCBI Taxonomy" id="272626"/>
    <lineage>
        <taxon>Bacteria</taxon>
        <taxon>Bacillati</taxon>
        <taxon>Bacillota</taxon>
        <taxon>Bacilli</taxon>
        <taxon>Bacillales</taxon>
        <taxon>Listeriaceae</taxon>
        <taxon>Listeria</taxon>
    </lineage>
</organism>
<sequence length="579" mass="62537">MENLKQLQERVAVSDGRAKADLVIKNGRIVNVFSGEIMEGDIAIKNGYIAGIGHFPDADQIIDAAGEFISPGFIDAHVHVESAMVTPSEFARVLLPNGVTTIITDPHEIANVAGEKGIEFMLEDAKGAPLDMFVMLPSSVPATEGEHNGETLHAKQLHPLYKHEKVIGLAEVMDFPSVAKGSADILTKIIDAKQEGGRIDGHGAGLTSADLNNYLAVGIRTDHESTSAKEALDRLRAGMFVMLREGTVGRDLKQTISAVTEKNSHRFCFCTDDKLINDLLTEGSINYNIRLAIENGVEPITAIQMATINAANCHNLPYLGAVAAGYQADIVFLKDLKTIEISKVLKNGQVVVENGTRKEAAFKKENKAKFISPKINHHLSIKDLELPLTNETCYVIGMQQNNLFTEKLMEQVTIKNGKFVPSIEKDLLKMAVVERHHNTGCVGVGIVKGFGLTEGAIATTVAHDSHNIVAVGVSDEAMEKAIDHVTKTGGGIAVVDAAGNVLHDLALQVAGLLSDKPYEEVENDLAGLLKAFNQISKAKGFDPFLTLSFLTLPVIPELKLTDQGLFDFATFQIIPNEVN</sequence>
<dbReference type="EC" id="3.5.4.2" evidence="1"/>
<dbReference type="EMBL" id="AL596170">
    <property type="protein sequence ID" value="CAC97084.1"/>
    <property type="molecule type" value="Genomic_DNA"/>
</dbReference>
<dbReference type="PIR" id="AD1664">
    <property type="entry name" value="AD1664"/>
</dbReference>
<dbReference type="RefSeq" id="WP_010990990.1">
    <property type="nucleotide sequence ID" value="NC_003212.1"/>
</dbReference>
<dbReference type="SMR" id="Q92AR6"/>
<dbReference type="STRING" id="272626.gene:17566209"/>
<dbReference type="KEGG" id="lin:adeC"/>
<dbReference type="eggNOG" id="COG1001">
    <property type="taxonomic scope" value="Bacteria"/>
</dbReference>
<dbReference type="HOGENOM" id="CLU_027935_0_0_9"/>
<dbReference type="OrthoDB" id="9775607at2"/>
<dbReference type="Proteomes" id="UP000002513">
    <property type="component" value="Chromosome"/>
</dbReference>
<dbReference type="GO" id="GO:0000034">
    <property type="term" value="F:adenine deaminase activity"/>
    <property type="evidence" value="ECO:0007669"/>
    <property type="project" value="UniProtKB-UniRule"/>
</dbReference>
<dbReference type="GO" id="GO:0006146">
    <property type="term" value="P:adenine catabolic process"/>
    <property type="evidence" value="ECO:0007669"/>
    <property type="project" value="InterPro"/>
</dbReference>
<dbReference type="CDD" id="cd01295">
    <property type="entry name" value="AdeC"/>
    <property type="match status" value="1"/>
</dbReference>
<dbReference type="FunFam" id="3.20.20.140:FF:000016">
    <property type="entry name" value="Adenine deaminase"/>
    <property type="match status" value="1"/>
</dbReference>
<dbReference type="Gene3D" id="3.20.20.140">
    <property type="entry name" value="Metal-dependent hydrolases"/>
    <property type="match status" value="1"/>
</dbReference>
<dbReference type="Gene3D" id="2.30.40.10">
    <property type="entry name" value="Urease, subunit C, domain 1"/>
    <property type="match status" value="1"/>
</dbReference>
<dbReference type="HAMAP" id="MF_01518">
    <property type="entry name" value="Adenine_deamin"/>
    <property type="match status" value="1"/>
</dbReference>
<dbReference type="InterPro" id="IPR006679">
    <property type="entry name" value="Adenine_deam"/>
</dbReference>
<dbReference type="InterPro" id="IPR026912">
    <property type="entry name" value="Adenine_deam_C"/>
</dbReference>
<dbReference type="InterPro" id="IPR006680">
    <property type="entry name" value="Amidohydro-rel"/>
</dbReference>
<dbReference type="InterPro" id="IPR011059">
    <property type="entry name" value="Metal-dep_hydrolase_composite"/>
</dbReference>
<dbReference type="InterPro" id="IPR032466">
    <property type="entry name" value="Metal_Hydrolase"/>
</dbReference>
<dbReference type="NCBIfam" id="TIGR01178">
    <property type="entry name" value="ade"/>
    <property type="match status" value="1"/>
</dbReference>
<dbReference type="PANTHER" id="PTHR11113:SF2">
    <property type="entry name" value="ADENINE DEAMINASE"/>
    <property type="match status" value="1"/>
</dbReference>
<dbReference type="PANTHER" id="PTHR11113">
    <property type="entry name" value="N-ACETYLGLUCOSAMINE-6-PHOSPHATE DEACETYLASE"/>
    <property type="match status" value="1"/>
</dbReference>
<dbReference type="Pfam" id="PF13382">
    <property type="entry name" value="Adenine_deam_C"/>
    <property type="match status" value="1"/>
</dbReference>
<dbReference type="Pfam" id="PF01979">
    <property type="entry name" value="Amidohydro_1"/>
    <property type="match status" value="1"/>
</dbReference>
<dbReference type="SUPFAM" id="SSF51338">
    <property type="entry name" value="Composite domain of metallo-dependent hydrolases"/>
    <property type="match status" value="1"/>
</dbReference>
<dbReference type="SUPFAM" id="SSF51556">
    <property type="entry name" value="Metallo-dependent hydrolases"/>
    <property type="match status" value="1"/>
</dbReference>
<reference key="1">
    <citation type="journal article" date="2001" name="Science">
        <title>Comparative genomics of Listeria species.</title>
        <authorList>
            <person name="Glaser P."/>
            <person name="Frangeul L."/>
            <person name="Buchrieser C."/>
            <person name="Rusniok C."/>
            <person name="Amend A."/>
            <person name="Baquero F."/>
            <person name="Berche P."/>
            <person name="Bloecker H."/>
            <person name="Brandt P."/>
            <person name="Chakraborty T."/>
            <person name="Charbit A."/>
            <person name="Chetouani F."/>
            <person name="Couve E."/>
            <person name="de Daruvar A."/>
            <person name="Dehoux P."/>
            <person name="Domann E."/>
            <person name="Dominguez-Bernal G."/>
            <person name="Duchaud E."/>
            <person name="Durant L."/>
            <person name="Dussurget O."/>
            <person name="Entian K.-D."/>
            <person name="Fsihi H."/>
            <person name="Garcia-del Portillo F."/>
            <person name="Garrido P."/>
            <person name="Gautier L."/>
            <person name="Goebel W."/>
            <person name="Gomez-Lopez N."/>
            <person name="Hain T."/>
            <person name="Hauf J."/>
            <person name="Jackson D."/>
            <person name="Jones L.-M."/>
            <person name="Kaerst U."/>
            <person name="Kreft J."/>
            <person name="Kuhn M."/>
            <person name="Kunst F."/>
            <person name="Kurapkat G."/>
            <person name="Madueno E."/>
            <person name="Maitournam A."/>
            <person name="Mata Vicente J."/>
            <person name="Ng E."/>
            <person name="Nedjari H."/>
            <person name="Nordsiek G."/>
            <person name="Novella S."/>
            <person name="de Pablos B."/>
            <person name="Perez-Diaz J.-C."/>
            <person name="Purcell R."/>
            <person name="Remmel B."/>
            <person name="Rose M."/>
            <person name="Schlueter T."/>
            <person name="Simoes N."/>
            <person name="Tierrez A."/>
            <person name="Vazquez-Boland J.-A."/>
            <person name="Voss H."/>
            <person name="Wehland J."/>
            <person name="Cossart P."/>
        </authorList>
    </citation>
    <scope>NUCLEOTIDE SEQUENCE [LARGE SCALE GENOMIC DNA]</scope>
    <source>
        <strain>ATCC BAA-680 / CLIP 11262</strain>
    </source>
</reference>
<comment type="catalytic activity">
    <reaction evidence="1">
        <text>adenine + H2O + H(+) = hypoxanthine + NH4(+)</text>
        <dbReference type="Rhea" id="RHEA:23688"/>
        <dbReference type="ChEBI" id="CHEBI:15377"/>
        <dbReference type="ChEBI" id="CHEBI:15378"/>
        <dbReference type="ChEBI" id="CHEBI:16708"/>
        <dbReference type="ChEBI" id="CHEBI:17368"/>
        <dbReference type="ChEBI" id="CHEBI:28938"/>
        <dbReference type="EC" id="3.5.4.2"/>
    </reaction>
</comment>
<comment type="cofactor">
    <cofactor evidence="1">
        <name>Mn(2+)</name>
        <dbReference type="ChEBI" id="CHEBI:29035"/>
    </cofactor>
</comment>
<comment type="similarity">
    <text evidence="1">Belongs to the metallo-dependent hydrolases superfamily. Adenine deaminase family.</text>
</comment>
<accession>Q92AR6</accession>
<feature type="chain" id="PRO_0000142427" description="Adenine deaminase">
    <location>
        <begin position="1"/>
        <end position="579"/>
    </location>
</feature>
<evidence type="ECO:0000255" key="1">
    <source>
        <dbReference type="HAMAP-Rule" id="MF_01518"/>
    </source>
</evidence>
<gene>
    <name evidence="1" type="primary">ade</name>
    <name type="synonym">adeC</name>
    <name type="ordered locus">lin1853</name>
</gene>
<proteinExistence type="inferred from homology"/>
<protein>
    <recommendedName>
        <fullName evidence="1">Adenine deaminase</fullName>
        <shortName evidence="1">Adenase</shortName>
        <shortName evidence="1">Adenine aminase</shortName>
        <ecNumber evidence="1">3.5.4.2</ecNumber>
    </recommendedName>
</protein>